<dbReference type="EMBL" id="CP001589">
    <property type="protein sequence ID" value="ACY62794.1"/>
    <property type="status" value="ALT_INIT"/>
    <property type="molecule type" value="Genomic_DNA"/>
</dbReference>
<dbReference type="RefSeq" id="WP_002213089.1">
    <property type="nucleotide sequence ID" value="NC_017160.1"/>
</dbReference>
<dbReference type="SMR" id="D0JWX6"/>
<dbReference type="GeneID" id="57976958"/>
<dbReference type="KEGG" id="ypx:YPD8_2117"/>
<dbReference type="PATRIC" id="fig|637385.3.peg.2810"/>
<dbReference type="HOGENOM" id="CLU_092328_0_0_6"/>
<dbReference type="GO" id="GO:0031241">
    <property type="term" value="C:periplasmic side of cell outer membrane"/>
    <property type="evidence" value="ECO:0007669"/>
    <property type="project" value="UniProtKB-UniRule"/>
</dbReference>
<dbReference type="GO" id="GO:0030234">
    <property type="term" value="F:enzyme regulator activity"/>
    <property type="evidence" value="ECO:0007669"/>
    <property type="project" value="UniProtKB-UniRule"/>
</dbReference>
<dbReference type="GO" id="GO:0009252">
    <property type="term" value="P:peptidoglycan biosynthetic process"/>
    <property type="evidence" value="ECO:0007669"/>
    <property type="project" value="UniProtKB-UniRule"/>
</dbReference>
<dbReference type="GO" id="GO:0008360">
    <property type="term" value="P:regulation of cell shape"/>
    <property type="evidence" value="ECO:0007669"/>
    <property type="project" value="UniProtKB-KW"/>
</dbReference>
<dbReference type="Gene3D" id="3.40.50.10610">
    <property type="entry name" value="ABC-type transport auxiliary lipoprotein component"/>
    <property type="match status" value="1"/>
</dbReference>
<dbReference type="HAMAP" id="MF_01889">
    <property type="entry name" value="LpoB"/>
    <property type="match status" value="1"/>
</dbReference>
<dbReference type="InterPro" id="IPR014094">
    <property type="entry name" value="LpoB"/>
</dbReference>
<dbReference type="InterPro" id="IPR012640">
    <property type="entry name" value="Membr_lipoprot_lipid_attach_CS"/>
</dbReference>
<dbReference type="NCBIfam" id="TIGR02722">
    <property type="entry name" value="lp"/>
    <property type="match status" value="1"/>
</dbReference>
<dbReference type="PANTHER" id="PTHR40593">
    <property type="entry name" value="PENICILLIN-BINDING PROTEIN ACTIVATOR LPOB"/>
    <property type="match status" value="1"/>
</dbReference>
<dbReference type="PANTHER" id="PTHR40593:SF1">
    <property type="entry name" value="PENICILLIN-BINDING PROTEIN ACTIVATOR LPOB"/>
    <property type="match status" value="1"/>
</dbReference>
<dbReference type="Pfam" id="PF08139">
    <property type="entry name" value="LPAM_1"/>
    <property type="match status" value="1"/>
</dbReference>
<dbReference type="Pfam" id="PF13036">
    <property type="entry name" value="LpoB"/>
    <property type="match status" value="1"/>
</dbReference>
<dbReference type="PROSITE" id="PS51257">
    <property type="entry name" value="PROKAR_LIPOPROTEIN"/>
    <property type="match status" value="1"/>
</dbReference>
<protein>
    <recommendedName>
        <fullName evidence="1">Penicillin-binding protein activator LpoB</fullName>
        <shortName evidence="1">PBP activator LpoB</shortName>
    </recommendedName>
</protein>
<reference key="1">
    <citation type="journal article" date="2009" name="Am. J. Trop. Med. Hyg.">
        <title>Spatial variation of Yersinia pestis from Yunnan Province of China.</title>
        <authorList>
            <person name="Zhang Z."/>
            <person name="Hai R."/>
            <person name="Song Z."/>
            <person name="Xia L."/>
            <person name="Liang Y."/>
            <person name="Cai H."/>
            <person name="Liang Y."/>
            <person name="Shen X."/>
            <person name="Zhang E."/>
            <person name="Xu J."/>
            <person name="Yu D."/>
            <person name="Yu X.J."/>
        </authorList>
    </citation>
    <scope>NUCLEOTIDE SEQUENCE [LARGE SCALE GENOMIC DNA]</scope>
    <source>
        <strain>D182038</strain>
    </source>
</reference>
<gene>
    <name evidence="1" type="primary">lpoB</name>
    <name type="ordered locus">YPD8_2117</name>
</gene>
<name>LPOB_YERP1</name>
<feature type="signal peptide" evidence="1">
    <location>
        <begin position="1"/>
        <end position="16"/>
    </location>
</feature>
<feature type="chain" id="PRO_0000405796" description="Penicillin-binding protein activator LpoB">
    <location>
        <begin position="17"/>
        <end position="191"/>
    </location>
</feature>
<feature type="lipid moiety-binding region" description="N-palmitoyl cysteine" evidence="1">
    <location>
        <position position="17"/>
    </location>
</feature>
<feature type="lipid moiety-binding region" description="S-diacylglycerol cysteine" evidence="1">
    <location>
        <position position="17"/>
    </location>
</feature>
<sequence>MKRYLSLALAALVLTGCVPPDSVTPTPPVTIEPVTPPDVEVPPPVDTVPQPPKVQSIDWAVSVEPLVAQMVNSDEVATGSILLVDSVKNNTNGALQTAKATAALHQVLSSNKKFVLISPQQLGVAKQTLGLSEEDSFGSRSKAIGLARYVGAQYVLYSDVSGDVKSPTIEMQLMQTQTGEIIWSGNAPVQY</sequence>
<accession>D0JWX6</accession>
<proteinExistence type="inferred from homology"/>
<keyword id="KW-0998">Cell outer membrane</keyword>
<keyword id="KW-0133">Cell shape</keyword>
<keyword id="KW-0449">Lipoprotein</keyword>
<keyword id="KW-0472">Membrane</keyword>
<keyword id="KW-0564">Palmitate</keyword>
<keyword id="KW-0573">Peptidoglycan synthesis</keyword>
<keyword id="KW-0732">Signal</keyword>
<organism>
    <name type="scientific">Yersinia pestis (strain D182038)</name>
    <dbReference type="NCBI Taxonomy" id="637385"/>
    <lineage>
        <taxon>Bacteria</taxon>
        <taxon>Pseudomonadati</taxon>
        <taxon>Pseudomonadota</taxon>
        <taxon>Gammaproteobacteria</taxon>
        <taxon>Enterobacterales</taxon>
        <taxon>Yersiniaceae</taxon>
        <taxon>Yersinia</taxon>
    </lineage>
</organism>
<evidence type="ECO:0000255" key="1">
    <source>
        <dbReference type="HAMAP-Rule" id="MF_01889"/>
    </source>
</evidence>
<evidence type="ECO:0000305" key="2"/>
<comment type="function">
    <text evidence="1">Regulator of peptidoglycan synthesis that is essential for the function of penicillin-binding protein 1B (PBP1b).</text>
</comment>
<comment type="subunit">
    <text evidence="1">Interacts with PBP1b.</text>
</comment>
<comment type="subcellular location">
    <subcellularLocation>
        <location evidence="1">Cell outer membrane</location>
        <topology evidence="1">Lipid-anchor</topology>
        <orientation evidence="1">Periplasmic side</orientation>
    </subcellularLocation>
</comment>
<comment type="similarity">
    <text evidence="1">Belongs to the LpoB family.</text>
</comment>
<comment type="sequence caution" evidence="2">
    <conflict type="erroneous initiation">
        <sequence resource="EMBL-CDS" id="ACY62794"/>
    </conflict>
    <text>Truncated N-terminus.</text>
</comment>